<dbReference type="EC" id="6.5.1.2" evidence="1"/>
<dbReference type="EMBL" id="AE017221">
    <property type="protein sequence ID" value="AAS81080.1"/>
    <property type="molecule type" value="Genomic_DNA"/>
</dbReference>
<dbReference type="RefSeq" id="WP_011173171.1">
    <property type="nucleotide sequence ID" value="NC_005835.1"/>
</dbReference>
<dbReference type="BMRB" id="Q72JN8"/>
<dbReference type="SMR" id="Q72JN8"/>
<dbReference type="KEGG" id="tth:TT_C0732"/>
<dbReference type="eggNOG" id="COG0272">
    <property type="taxonomic scope" value="Bacteria"/>
</dbReference>
<dbReference type="HOGENOM" id="CLU_007764_2_1_0"/>
<dbReference type="OrthoDB" id="9759736at2"/>
<dbReference type="Proteomes" id="UP000000592">
    <property type="component" value="Chromosome"/>
</dbReference>
<dbReference type="GO" id="GO:0005829">
    <property type="term" value="C:cytosol"/>
    <property type="evidence" value="ECO:0007669"/>
    <property type="project" value="TreeGrafter"/>
</dbReference>
<dbReference type="GO" id="GO:0003677">
    <property type="term" value="F:DNA binding"/>
    <property type="evidence" value="ECO:0007669"/>
    <property type="project" value="InterPro"/>
</dbReference>
<dbReference type="GO" id="GO:0003911">
    <property type="term" value="F:DNA ligase (NAD+) activity"/>
    <property type="evidence" value="ECO:0007669"/>
    <property type="project" value="UniProtKB-UniRule"/>
</dbReference>
<dbReference type="GO" id="GO:0046872">
    <property type="term" value="F:metal ion binding"/>
    <property type="evidence" value="ECO:0007669"/>
    <property type="project" value="UniProtKB-KW"/>
</dbReference>
<dbReference type="GO" id="GO:0006281">
    <property type="term" value="P:DNA repair"/>
    <property type="evidence" value="ECO:0007669"/>
    <property type="project" value="UniProtKB-KW"/>
</dbReference>
<dbReference type="GO" id="GO:0006260">
    <property type="term" value="P:DNA replication"/>
    <property type="evidence" value="ECO:0007669"/>
    <property type="project" value="UniProtKB-KW"/>
</dbReference>
<dbReference type="CDD" id="cd17748">
    <property type="entry name" value="BRCT_DNA_ligase_like"/>
    <property type="match status" value="1"/>
</dbReference>
<dbReference type="CDD" id="cd00114">
    <property type="entry name" value="LIGANc"/>
    <property type="match status" value="1"/>
</dbReference>
<dbReference type="FunFam" id="1.10.150.20:FF:000006">
    <property type="entry name" value="DNA ligase"/>
    <property type="match status" value="1"/>
</dbReference>
<dbReference type="FunFam" id="1.10.150.20:FF:000007">
    <property type="entry name" value="DNA ligase"/>
    <property type="match status" value="1"/>
</dbReference>
<dbReference type="FunFam" id="1.10.287.610:FF:000002">
    <property type="entry name" value="DNA ligase"/>
    <property type="match status" value="1"/>
</dbReference>
<dbReference type="FunFam" id="2.40.50.140:FF:000012">
    <property type="entry name" value="DNA ligase"/>
    <property type="match status" value="1"/>
</dbReference>
<dbReference type="FunFam" id="3.30.470.30:FF:000001">
    <property type="entry name" value="DNA ligase"/>
    <property type="match status" value="1"/>
</dbReference>
<dbReference type="Gene3D" id="6.20.10.30">
    <property type="match status" value="1"/>
</dbReference>
<dbReference type="Gene3D" id="1.10.150.20">
    <property type="entry name" value="5' to 3' exonuclease, C-terminal subdomain"/>
    <property type="match status" value="2"/>
</dbReference>
<dbReference type="Gene3D" id="3.40.50.10190">
    <property type="entry name" value="BRCT domain"/>
    <property type="match status" value="1"/>
</dbReference>
<dbReference type="Gene3D" id="3.30.470.30">
    <property type="entry name" value="DNA ligase/mRNA capping enzyme"/>
    <property type="match status" value="1"/>
</dbReference>
<dbReference type="Gene3D" id="1.10.287.610">
    <property type="entry name" value="Helix hairpin bin"/>
    <property type="match status" value="1"/>
</dbReference>
<dbReference type="Gene3D" id="2.40.50.140">
    <property type="entry name" value="Nucleic acid-binding proteins"/>
    <property type="match status" value="1"/>
</dbReference>
<dbReference type="HAMAP" id="MF_01588">
    <property type="entry name" value="DNA_ligase_A"/>
    <property type="match status" value="1"/>
</dbReference>
<dbReference type="InterPro" id="IPR001357">
    <property type="entry name" value="BRCT_dom"/>
</dbReference>
<dbReference type="InterPro" id="IPR036420">
    <property type="entry name" value="BRCT_dom_sf"/>
</dbReference>
<dbReference type="InterPro" id="IPR041663">
    <property type="entry name" value="DisA/LigA_HHH"/>
</dbReference>
<dbReference type="InterPro" id="IPR001679">
    <property type="entry name" value="DNA_ligase"/>
</dbReference>
<dbReference type="InterPro" id="IPR018239">
    <property type="entry name" value="DNA_ligase_AS"/>
</dbReference>
<dbReference type="InterPro" id="IPR033136">
    <property type="entry name" value="DNA_ligase_CS"/>
</dbReference>
<dbReference type="InterPro" id="IPR013839">
    <property type="entry name" value="DNAligase_adenylation"/>
</dbReference>
<dbReference type="InterPro" id="IPR013840">
    <property type="entry name" value="DNAligase_N"/>
</dbReference>
<dbReference type="InterPro" id="IPR003583">
    <property type="entry name" value="Hlx-hairpin-Hlx_DNA-bd_motif"/>
</dbReference>
<dbReference type="InterPro" id="IPR012340">
    <property type="entry name" value="NA-bd_OB-fold"/>
</dbReference>
<dbReference type="InterPro" id="IPR004150">
    <property type="entry name" value="NAD_DNA_ligase_OB"/>
</dbReference>
<dbReference type="InterPro" id="IPR010994">
    <property type="entry name" value="RuvA_2-like"/>
</dbReference>
<dbReference type="NCBIfam" id="TIGR00575">
    <property type="entry name" value="dnlj"/>
    <property type="match status" value="1"/>
</dbReference>
<dbReference type="NCBIfam" id="NF005932">
    <property type="entry name" value="PRK07956.1"/>
    <property type="match status" value="1"/>
</dbReference>
<dbReference type="PANTHER" id="PTHR23389">
    <property type="entry name" value="CHROMOSOME TRANSMISSION FIDELITY FACTOR 18"/>
    <property type="match status" value="1"/>
</dbReference>
<dbReference type="PANTHER" id="PTHR23389:SF9">
    <property type="entry name" value="DNA LIGASE"/>
    <property type="match status" value="1"/>
</dbReference>
<dbReference type="Pfam" id="PF00533">
    <property type="entry name" value="BRCT"/>
    <property type="match status" value="1"/>
</dbReference>
<dbReference type="Pfam" id="PF01653">
    <property type="entry name" value="DNA_ligase_aden"/>
    <property type="match status" value="1"/>
</dbReference>
<dbReference type="Pfam" id="PF03120">
    <property type="entry name" value="DNA_ligase_OB"/>
    <property type="match status" value="1"/>
</dbReference>
<dbReference type="Pfam" id="PF12826">
    <property type="entry name" value="HHH_2"/>
    <property type="match status" value="1"/>
</dbReference>
<dbReference type="Pfam" id="PF14520">
    <property type="entry name" value="HHH_5"/>
    <property type="match status" value="1"/>
</dbReference>
<dbReference type="Pfam" id="PF22745">
    <property type="entry name" value="Nlig-Ia"/>
    <property type="match status" value="1"/>
</dbReference>
<dbReference type="PIRSF" id="PIRSF001604">
    <property type="entry name" value="LigA"/>
    <property type="match status" value="1"/>
</dbReference>
<dbReference type="SMART" id="SM00292">
    <property type="entry name" value="BRCT"/>
    <property type="match status" value="1"/>
</dbReference>
<dbReference type="SMART" id="SM00278">
    <property type="entry name" value="HhH1"/>
    <property type="match status" value="4"/>
</dbReference>
<dbReference type="SMART" id="SM00532">
    <property type="entry name" value="LIGANc"/>
    <property type="match status" value="1"/>
</dbReference>
<dbReference type="SUPFAM" id="SSF52113">
    <property type="entry name" value="BRCT domain"/>
    <property type="match status" value="1"/>
</dbReference>
<dbReference type="SUPFAM" id="SSF56091">
    <property type="entry name" value="DNA ligase/mRNA capping enzyme, catalytic domain"/>
    <property type="match status" value="1"/>
</dbReference>
<dbReference type="SUPFAM" id="SSF50249">
    <property type="entry name" value="Nucleic acid-binding proteins"/>
    <property type="match status" value="1"/>
</dbReference>
<dbReference type="SUPFAM" id="SSF47781">
    <property type="entry name" value="RuvA domain 2-like"/>
    <property type="match status" value="1"/>
</dbReference>
<dbReference type="PROSITE" id="PS50172">
    <property type="entry name" value="BRCT"/>
    <property type="match status" value="1"/>
</dbReference>
<dbReference type="PROSITE" id="PS01055">
    <property type="entry name" value="DNA_LIGASE_N1"/>
    <property type="match status" value="1"/>
</dbReference>
<dbReference type="PROSITE" id="PS01056">
    <property type="entry name" value="DNA_LIGASE_N2"/>
    <property type="match status" value="1"/>
</dbReference>
<keyword id="KW-0227">DNA damage</keyword>
<keyword id="KW-0234">DNA repair</keyword>
<keyword id="KW-0235">DNA replication</keyword>
<keyword id="KW-0436">Ligase</keyword>
<keyword id="KW-0460">Magnesium</keyword>
<keyword id="KW-0464">Manganese</keyword>
<keyword id="KW-0479">Metal-binding</keyword>
<keyword id="KW-0520">NAD</keyword>
<keyword id="KW-0862">Zinc</keyword>
<proteinExistence type="inferred from homology"/>
<comment type="function">
    <text evidence="1">DNA ligase that catalyzes the formation of phosphodiester linkages between 5'-phosphoryl and 3'-hydroxyl groups in double-stranded DNA using NAD as a coenzyme and as the energy source for the reaction. It is essential for DNA replication and repair of damaged DNA.</text>
</comment>
<comment type="catalytic activity">
    <reaction evidence="1">
        <text>NAD(+) + (deoxyribonucleotide)n-3'-hydroxyl + 5'-phospho-(deoxyribonucleotide)m = (deoxyribonucleotide)n+m + AMP + beta-nicotinamide D-nucleotide.</text>
        <dbReference type="EC" id="6.5.1.2"/>
    </reaction>
</comment>
<comment type="cofactor">
    <cofactor evidence="1">
        <name>Mg(2+)</name>
        <dbReference type="ChEBI" id="CHEBI:18420"/>
    </cofactor>
    <cofactor evidence="1">
        <name>Mn(2+)</name>
        <dbReference type="ChEBI" id="CHEBI:29035"/>
    </cofactor>
</comment>
<comment type="similarity">
    <text evidence="1">Belongs to the NAD-dependent DNA ligase family. LigA subfamily.</text>
</comment>
<sequence length="676" mass="76956">MTLEEARKRVNELRDLIRYHNYRYYVLADPEISDAEYDRLLRELKELEERFPELKSPDSPTEQVGARPLEATFRPVRHPTRMYSLDNAFNFDELKAFEERIERALGREGPFAYTVEHKVDGLSVNLYYEDGVLVYGATRGDGEVGEEVTQNLLTIPTIPRRLKGVPERLEVRGEVYMPVEAFLRLNEELEERGERIFKNPRNAAAGSLRQKDPRITAKRGLRATFYALGLGLEEVEREGVATQFALLHWLKEKGFPVEHGYARAVGAEGVEAVYQDWLKKRRALPFEADGVVVKLDELALWRELGYTARAPRFAIAYKFPAEEKETRLLDVVFQVGRTGRVTPVGILEPVFLEGSEVSRVTLHNESYIEELDIRIGDWVLVHKAGGVIPEVLRVLKERRTGEERPIRWPETCPECGHRLLKEGKVHRCPNPLCPAKRFEAIRHFASRKAMDIQGLGEKLIERLLEKGLVKDVADLYRLRKEDLVGLERMGEKSAQNLLRQIEESKRRGLERLLYALGLPGVGEVLARNLAARFGNMDRLLEASLEELLEVEEVGELTARAILETLKDPAFRDLVRRLKEAGVEMEAKEKGGEALKGLTFVITGELSRPREEVKALLRRLGAKVTDSVSRKTSYLVVGENPGSKLEKARALGVPTLTEEELYRLLEARTGKKAEELV</sequence>
<gene>
    <name evidence="1" type="primary">ligA</name>
    <name type="ordered locus">TT_C0732</name>
</gene>
<name>DNLJ_THET2</name>
<feature type="chain" id="PRO_0000313493" description="DNA ligase">
    <location>
        <begin position="1"/>
        <end position="676"/>
    </location>
</feature>
<feature type="domain" description="BRCT" evidence="1">
    <location>
        <begin position="589"/>
        <end position="676"/>
    </location>
</feature>
<feature type="active site" description="N6-AMP-lysine intermediate" evidence="1">
    <location>
        <position position="118"/>
    </location>
</feature>
<feature type="binding site" evidence="1">
    <location>
        <begin position="34"/>
        <end position="38"/>
    </location>
    <ligand>
        <name>NAD(+)</name>
        <dbReference type="ChEBI" id="CHEBI:57540"/>
    </ligand>
</feature>
<feature type="binding site" evidence="1">
    <location>
        <begin position="84"/>
        <end position="85"/>
    </location>
    <ligand>
        <name>NAD(+)</name>
        <dbReference type="ChEBI" id="CHEBI:57540"/>
    </ligand>
</feature>
<feature type="binding site" evidence="1">
    <location>
        <position position="116"/>
    </location>
    <ligand>
        <name>NAD(+)</name>
        <dbReference type="ChEBI" id="CHEBI:57540"/>
    </ligand>
</feature>
<feature type="binding site" evidence="1">
    <location>
        <position position="139"/>
    </location>
    <ligand>
        <name>NAD(+)</name>
        <dbReference type="ChEBI" id="CHEBI:57540"/>
    </ligand>
</feature>
<feature type="binding site" evidence="1">
    <location>
        <position position="174"/>
    </location>
    <ligand>
        <name>NAD(+)</name>
        <dbReference type="ChEBI" id="CHEBI:57540"/>
    </ligand>
</feature>
<feature type="binding site" evidence="1">
    <location>
        <position position="294"/>
    </location>
    <ligand>
        <name>NAD(+)</name>
        <dbReference type="ChEBI" id="CHEBI:57540"/>
    </ligand>
</feature>
<feature type="binding site" evidence="1">
    <location>
        <position position="318"/>
    </location>
    <ligand>
        <name>NAD(+)</name>
        <dbReference type="ChEBI" id="CHEBI:57540"/>
    </ligand>
</feature>
<feature type="binding site" evidence="1">
    <location>
        <position position="412"/>
    </location>
    <ligand>
        <name>Zn(2+)</name>
        <dbReference type="ChEBI" id="CHEBI:29105"/>
    </ligand>
</feature>
<feature type="binding site" evidence="1">
    <location>
        <position position="415"/>
    </location>
    <ligand>
        <name>Zn(2+)</name>
        <dbReference type="ChEBI" id="CHEBI:29105"/>
    </ligand>
</feature>
<feature type="binding site" evidence="1">
    <location>
        <position position="428"/>
    </location>
    <ligand>
        <name>Zn(2+)</name>
        <dbReference type="ChEBI" id="CHEBI:29105"/>
    </ligand>
</feature>
<feature type="binding site" evidence="1">
    <location>
        <position position="433"/>
    </location>
    <ligand>
        <name>Zn(2+)</name>
        <dbReference type="ChEBI" id="CHEBI:29105"/>
    </ligand>
</feature>
<accession>Q72JN8</accession>
<reference key="1">
    <citation type="journal article" date="2004" name="Nat. Biotechnol.">
        <title>The genome sequence of the extreme thermophile Thermus thermophilus.</title>
        <authorList>
            <person name="Henne A."/>
            <person name="Brueggemann H."/>
            <person name="Raasch C."/>
            <person name="Wiezer A."/>
            <person name="Hartsch T."/>
            <person name="Liesegang H."/>
            <person name="Johann A."/>
            <person name="Lienard T."/>
            <person name="Gohl O."/>
            <person name="Martinez-Arias R."/>
            <person name="Jacobi C."/>
            <person name="Starkuviene V."/>
            <person name="Schlenczeck S."/>
            <person name="Dencker S."/>
            <person name="Huber R."/>
            <person name="Klenk H.-P."/>
            <person name="Kramer W."/>
            <person name="Merkl R."/>
            <person name="Gottschalk G."/>
            <person name="Fritz H.-J."/>
        </authorList>
    </citation>
    <scope>NUCLEOTIDE SEQUENCE [LARGE SCALE GENOMIC DNA]</scope>
    <source>
        <strain>ATCC BAA-163 / DSM 7039 / HB27</strain>
    </source>
</reference>
<organism>
    <name type="scientific">Thermus thermophilus (strain ATCC BAA-163 / DSM 7039 / HB27)</name>
    <dbReference type="NCBI Taxonomy" id="262724"/>
    <lineage>
        <taxon>Bacteria</taxon>
        <taxon>Thermotogati</taxon>
        <taxon>Deinococcota</taxon>
        <taxon>Deinococci</taxon>
        <taxon>Thermales</taxon>
        <taxon>Thermaceae</taxon>
        <taxon>Thermus</taxon>
    </lineage>
</organism>
<protein>
    <recommendedName>
        <fullName evidence="1">DNA ligase</fullName>
        <ecNumber evidence="1">6.5.1.2</ecNumber>
    </recommendedName>
    <alternativeName>
        <fullName evidence="1">Polydeoxyribonucleotide synthase [NAD(+)]</fullName>
    </alternativeName>
</protein>
<evidence type="ECO:0000255" key="1">
    <source>
        <dbReference type="HAMAP-Rule" id="MF_01588"/>
    </source>
</evidence>